<proteinExistence type="inferred from homology"/>
<comment type="function">
    <text evidence="1">Located on the platform of the 30S subunit, it bridges several disparate RNA helices of the 16S rRNA. Forms part of the Shine-Dalgarno cleft in the 70S ribosome.</text>
</comment>
<comment type="subunit">
    <text evidence="1">Part of the 30S ribosomal subunit. Interacts with proteins S7 and S18. Binds to IF-3.</text>
</comment>
<comment type="similarity">
    <text evidence="1">Belongs to the universal ribosomal protein uS11 family.</text>
</comment>
<protein>
    <recommendedName>
        <fullName evidence="1">Small ribosomal subunit protein uS11</fullName>
    </recommendedName>
    <alternativeName>
        <fullName evidence="2">30S ribosomal protein S11</fullName>
    </alternativeName>
</protein>
<accession>A6X0E1</accession>
<organism>
    <name type="scientific">Brucella anthropi (strain ATCC 49188 / DSM 6882 / CCUG 24695 / JCM 21032 / LMG 3331 / NBRC 15819 / NCTC 12168 / Alc 37)</name>
    <name type="common">Ochrobactrum anthropi</name>
    <dbReference type="NCBI Taxonomy" id="439375"/>
    <lineage>
        <taxon>Bacteria</taxon>
        <taxon>Pseudomonadati</taxon>
        <taxon>Pseudomonadota</taxon>
        <taxon>Alphaproteobacteria</taxon>
        <taxon>Hyphomicrobiales</taxon>
        <taxon>Brucellaceae</taxon>
        <taxon>Brucella/Ochrobactrum group</taxon>
        <taxon>Brucella</taxon>
    </lineage>
</organism>
<gene>
    <name evidence="1" type="primary">rpsK</name>
    <name type="ordered locus">Oant_1979</name>
</gene>
<keyword id="KW-1185">Reference proteome</keyword>
<keyword id="KW-0687">Ribonucleoprotein</keyword>
<keyword id="KW-0689">Ribosomal protein</keyword>
<keyword id="KW-0694">RNA-binding</keyword>
<keyword id="KW-0699">rRNA-binding</keyword>
<sequence length="129" mass="13891">MAKEATRVRRRERKNISSGVAHVNSTFNNTMITITDAQGNAIAWSSAGAQGFKGSRKSTPFAAQIAAEDCAKKAQEHGMRSLEVEVCGPGSGRESALRALQAAGFVITSIRDVTPIPHNGCRPRKKRRV</sequence>
<name>RS11_BRUA4</name>
<evidence type="ECO:0000255" key="1">
    <source>
        <dbReference type="HAMAP-Rule" id="MF_01310"/>
    </source>
</evidence>
<evidence type="ECO:0000305" key="2"/>
<reference key="1">
    <citation type="journal article" date="2011" name="J. Bacteriol.">
        <title>Genome of Ochrobactrum anthropi ATCC 49188 T, a versatile opportunistic pathogen and symbiont of several eukaryotic hosts.</title>
        <authorList>
            <person name="Chain P.S."/>
            <person name="Lang D.M."/>
            <person name="Comerci D.J."/>
            <person name="Malfatti S.A."/>
            <person name="Vergez L.M."/>
            <person name="Shin M."/>
            <person name="Ugalde R.A."/>
            <person name="Garcia E."/>
            <person name="Tolmasky M.E."/>
        </authorList>
    </citation>
    <scope>NUCLEOTIDE SEQUENCE [LARGE SCALE GENOMIC DNA]</scope>
    <source>
        <strain>ATCC 49188 / DSM 6882 / CCUG 24695 / JCM 21032 / LMG 3331 / NBRC 15819 / NCTC 12168 / Alc 37</strain>
    </source>
</reference>
<feature type="chain" id="PRO_1000051842" description="Small ribosomal subunit protein uS11">
    <location>
        <begin position="1"/>
        <end position="129"/>
    </location>
</feature>
<dbReference type="EMBL" id="CP000758">
    <property type="protein sequence ID" value="ABS14695.1"/>
    <property type="molecule type" value="Genomic_DNA"/>
</dbReference>
<dbReference type="RefSeq" id="WP_002964339.1">
    <property type="nucleotide sequence ID" value="NC_009667.1"/>
</dbReference>
<dbReference type="SMR" id="A6X0E1"/>
<dbReference type="STRING" id="439375.Oant_1979"/>
<dbReference type="GeneID" id="97533547"/>
<dbReference type="KEGG" id="oan:Oant_1979"/>
<dbReference type="eggNOG" id="COG0100">
    <property type="taxonomic scope" value="Bacteria"/>
</dbReference>
<dbReference type="HOGENOM" id="CLU_072439_5_0_5"/>
<dbReference type="PhylomeDB" id="A6X0E1"/>
<dbReference type="Proteomes" id="UP000002301">
    <property type="component" value="Chromosome 1"/>
</dbReference>
<dbReference type="GO" id="GO:1990904">
    <property type="term" value="C:ribonucleoprotein complex"/>
    <property type="evidence" value="ECO:0007669"/>
    <property type="project" value="UniProtKB-KW"/>
</dbReference>
<dbReference type="GO" id="GO:0005840">
    <property type="term" value="C:ribosome"/>
    <property type="evidence" value="ECO:0007669"/>
    <property type="project" value="UniProtKB-KW"/>
</dbReference>
<dbReference type="GO" id="GO:0019843">
    <property type="term" value="F:rRNA binding"/>
    <property type="evidence" value="ECO:0007669"/>
    <property type="project" value="UniProtKB-UniRule"/>
</dbReference>
<dbReference type="GO" id="GO:0003735">
    <property type="term" value="F:structural constituent of ribosome"/>
    <property type="evidence" value="ECO:0007669"/>
    <property type="project" value="InterPro"/>
</dbReference>
<dbReference type="GO" id="GO:0006412">
    <property type="term" value="P:translation"/>
    <property type="evidence" value="ECO:0007669"/>
    <property type="project" value="UniProtKB-UniRule"/>
</dbReference>
<dbReference type="FunFam" id="3.30.420.80:FF:000001">
    <property type="entry name" value="30S ribosomal protein S11"/>
    <property type="match status" value="1"/>
</dbReference>
<dbReference type="Gene3D" id="3.30.420.80">
    <property type="entry name" value="Ribosomal protein S11"/>
    <property type="match status" value="1"/>
</dbReference>
<dbReference type="HAMAP" id="MF_01310">
    <property type="entry name" value="Ribosomal_uS11"/>
    <property type="match status" value="1"/>
</dbReference>
<dbReference type="InterPro" id="IPR001971">
    <property type="entry name" value="Ribosomal_uS11"/>
</dbReference>
<dbReference type="InterPro" id="IPR019981">
    <property type="entry name" value="Ribosomal_uS11_bac-type"/>
</dbReference>
<dbReference type="InterPro" id="IPR018102">
    <property type="entry name" value="Ribosomal_uS11_CS"/>
</dbReference>
<dbReference type="InterPro" id="IPR036967">
    <property type="entry name" value="Ribosomal_uS11_sf"/>
</dbReference>
<dbReference type="NCBIfam" id="NF003698">
    <property type="entry name" value="PRK05309.1"/>
    <property type="match status" value="1"/>
</dbReference>
<dbReference type="NCBIfam" id="TIGR03632">
    <property type="entry name" value="uS11_bact"/>
    <property type="match status" value="1"/>
</dbReference>
<dbReference type="PANTHER" id="PTHR11759">
    <property type="entry name" value="40S RIBOSOMAL PROTEIN S14/30S RIBOSOMAL PROTEIN S11"/>
    <property type="match status" value="1"/>
</dbReference>
<dbReference type="Pfam" id="PF00411">
    <property type="entry name" value="Ribosomal_S11"/>
    <property type="match status" value="1"/>
</dbReference>
<dbReference type="PIRSF" id="PIRSF002131">
    <property type="entry name" value="Ribosomal_S11"/>
    <property type="match status" value="1"/>
</dbReference>
<dbReference type="SUPFAM" id="SSF53137">
    <property type="entry name" value="Translational machinery components"/>
    <property type="match status" value="1"/>
</dbReference>
<dbReference type="PROSITE" id="PS00054">
    <property type="entry name" value="RIBOSOMAL_S11"/>
    <property type="match status" value="1"/>
</dbReference>